<gene>
    <name type="primary">HRG</name>
</gene>
<accession>Q28640</accession>
<proteinExistence type="evidence at protein level"/>
<organism>
    <name type="scientific">Oryctolagus cuniculus</name>
    <name type="common">Rabbit</name>
    <dbReference type="NCBI Taxonomy" id="9986"/>
    <lineage>
        <taxon>Eukaryota</taxon>
        <taxon>Metazoa</taxon>
        <taxon>Chordata</taxon>
        <taxon>Craniata</taxon>
        <taxon>Vertebrata</taxon>
        <taxon>Euteleostomi</taxon>
        <taxon>Mammalia</taxon>
        <taxon>Eutheria</taxon>
        <taxon>Euarchontoglires</taxon>
        <taxon>Glires</taxon>
        <taxon>Lagomorpha</taxon>
        <taxon>Leporidae</taxon>
        <taxon>Oryctolagus</taxon>
    </lineage>
</organism>
<protein>
    <recommendedName>
        <fullName>Histidine-rich glycoprotein</fullName>
    </recommendedName>
    <alternativeName>
        <fullName>Histidine-proline-rich glycoprotein</fullName>
        <shortName>HPRG</shortName>
    </alternativeName>
</protein>
<comment type="function">
    <text evidence="1 4">Plasma glycoprotein that binds a number of ligands such as heme, heparin, heparan sulfate, thrombospondin, plasminogen, and divalent metal ions. Inhibits rosette formation. Acts as an adapter protein and implicated in regulating many processes such as immune complex and pathogen clearance, cell adhesion, angiogenesis, coagulation and fibrinolysis. Mediates clearance of necrotic cells through enhancing the phagocytosis of necrotic cells in a heparan sulfate-dependent pathway. This process can be regulated by the presence of certain HRG ligands such as heparin and zinc ions. Binds to IgG subclasses of immunoglobins containing kappa and lambda light chains with different affinities regulating their clearance and inhibiting the formation of insoluble immune complexes. Binds T-cells and alters the cell morphology Modulates angiogenesis by blocking the CD6-mediated antiangiongenic effect of thrombospondins, THBS1 and THBS2 (By similarity). Tethers plasminogen to the cell surface.</text>
</comment>
<comment type="subunit">
    <text evidence="1 5 6">Interacts with THBS1 (via the TSP type I repeats); the interaction blocks the antiangiogenic effect of THBS1 with CD36 (By similarity). Interacts with THBS2; the interaction blocks the antiangiogenic effect of THBS2 with CD36. Interacts with HPSE; the interaction is enhanced at acidic pH, partially inhibits binding of HPSE to cell surface receptors and modulates its enzymatic activity. Interacts (via the HRR domain) with TMP1; the interaction partially mediates the antiangiogenic properties of HRG. Interacts with kappa and lambda light chains of IgG molecules. Interacts with ATP5F1A; the interaction occurs on the surface of T-cells and alters their cell morphology in concert with CONA. Binds IgG molecules containing kappa and lambda light chains and inhibits the formation of insoluble immunoglobulin complexes. Interacts with F12; the interaction, which is enhanced in the presence of zinc ions and inhibited by heparin-binding to HRG, inhibits factor XII autoactivation and contact-initiated coagulation (By similarity). Interacts with PLG (via its Kringle domains); the interaction tethers PLG to the cell surface and enhances its activation. Interacts (via the HRR domain) with TPM1; the interaction appears to contribute to the antiangiogenic properties of the HRR domain.</text>
</comment>
<comment type="subcellular location">
    <subcellularLocation>
        <location>Secreted</location>
    </subcellularLocation>
</comment>
<comment type="domain">
    <text>The His-rich (HRR) region contains approximately 12 tandem internal repeats of the 5-residue G[H/P][H/P]PH consensus sequence. HRR binds heparan sulfate and possesses antiangiogenic, antibacterial and antifungal properties through binding Candida cells, and preferentially lysing the ergosterol-containing liposomes at low pH. The tandem repeats also bind divalent metal ions and heme.</text>
</comment>
<comment type="domain">
    <text>The cystatin domains can also bind heparan sulfate. Binding is enhanced in the presence of zinc ions.</text>
</comment>
<comment type="PTM">
    <text evidence="1">N-glycosylated.</text>
</comment>
<comment type="PTM">
    <text evidence="1">Proteolytic cleavage produces several HRG fragments which are mostly disulfide-linked and, therefore, not released. On platelet activation, may release a 33 kDa antiangiogenic peptide which encompasses the HRR (By similarity).</text>
</comment>
<reference key="1">
    <citation type="journal article" date="1996" name="Biochemistry">
        <title>Domain structure and conformation of histidine-proline-rich glycoprotein.</title>
        <authorList>
            <person name="Borza D.-B."/>
            <person name="Tatum F.M."/>
            <person name="Morgan W.T."/>
        </authorList>
    </citation>
    <scope>NUCLEOTIDE SEQUENCE [MRNA]</scope>
    <scope>PROTEIN SEQUENCE OF 9-23; 301-313 AND 422-429</scope>
    <source>
        <tissue>Serum</tissue>
    </source>
</reference>
<reference key="2">
    <citation type="journal article" date="1989" name="J. Mol. Recognit.">
        <title>A heme- and metal-binding hexapeptide from the sequence of rabbit plasma histidine-rich glycoprotein.</title>
        <authorList>
            <person name="Morgan W.T."/>
            <person name="Deaciuc V."/>
            <person name="Riehm J.P."/>
        </authorList>
    </citation>
    <scope>HEME- AND METAL-BINDING</scope>
</reference>
<reference key="3">
    <citation type="journal article" date="1997" name="J. Biol. Chem.">
        <title>Acceleration of plasminogen activation by tissue plasminogen activator on surface-bound histidine-proline-rich glycoprotein.</title>
        <authorList>
            <person name="Borza D.B."/>
            <person name="Morgan W.T."/>
        </authorList>
    </citation>
    <scope>INTERACTION WITH PLG</scope>
</reference>
<reference key="4">
    <citation type="journal article" date="2002" name="Cancer Res.">
        <title>Histidine-proline-rich glycoprotein has potent antiangiogenic activity mediated through the histidine-proline-rich domain.</title>
        <authorList>
            <person name="Juarez J.C."/>
            <person name="Guan X."/>
            <person name="Shipulina N.V."/>
            <person name="Plunkett M.L."/>
            <person name="Parry G.C."/>
            <person name="Shaw D.E."/>
            <person name="Zhang J.C."/>
            <person name="Rabbani S.A."/>
            <person name="McCrae K.R."/>
            <person name="Mazar A.P."/>
            <person name="Morgan W.T."/>
            <person name="Donate F."/>
        </authorList>
    </citation>
    <scope>FUNCTION OF HIS/PRO-RICH DOMAIN</scope>
</reference>
<reference key="5">
    <citation type="journal article" date="2004" name="Thromb. Haemost.">
        <title>Histidine-proline rich glycoprotein (HPRG) binds and transduces anti-angiogenic signals through cell surface tropomyosin on endothelial cells.</title>
        <authorList>
            <person name="Guan X."/>
            <person name="Juarez J.C."/>
            <person name="Qi X."/>
            <person name="Shipulina N.V."/>
            <person name="Shaw D.E."/>
            <person name="Morgan W.T."/>
            <person name="McCrae K.R."/>
            <person name="Mazar A.P."/>
            <person name="Donate F."/>
        </authorList>
    </citation>
    <scope>INTERACTION WITH TPM1</scope>
</reference>
<keyword id="KW-0002">3D-structure</keyword>
<keyword id="KW-0094">Blood coagulation</keyword>
<keyword id="KW-0186">Copper</keyword>
<keyword id="KW-0903">Direct protein sequencing</keyword>
<keyword id="KW-1015">Disulfide bond</keyword>
<keyword id="KW-0280">Fibrinolysis</keyword>
<keyword id="KW-0325">Glycoprotein</keyword>
<keyword id="KW-0356">Hemostasis</keyword>
<keyword id="KW-0358">Heparin-binding</keyword>
<keyword id="KW-1185">Reference proteome</keyword>
<keyword id="KW-0677">Repeat</keyword>
<keyword id="KW-0964">Secreted</keyword>
<keyword id="KW-0732">Signal</keyword>
<keyword id="KW-0862">Zinc</keyword>
<feature type="signal peptide" evidence="2">
    <location>
        <begin position="1" status="less than"/>
        <end position="8"/>
    </location>
</feature>
<feature type="chain" id="PRO_0000006710" description="Histidine-rich glycoprotein">
    <location>
        <begin position="9"/>
        <end position="526"/>
    </location>
</feature>
<feature type="domain" description="Cystatin 1">
    <location>
        <begin position="9"/>
        <end position="126"/>
    </location>
</feature>
<feature type="domain" description="Cystatin 2">
    <location>
        <begin position="127"/>
        <end position="243"/>
    </location>
</feature>
<feature type="region of interest" description="Interaction with ATP5F1A" evidence="1">
    <location>
        <begin position="31"/>
        <end position="74"/>
    </location>
</feature>
<feature type="region of interest" description="Disordered" evidence="3">
    <location>
        <begin position="243"/>
        <end position="449"/>
    </location>
</feature>
<feature type="compositionally biased region" description="Basic residues" evidence="3">
    <location>
        <begin position="260"/>
        <end position="269"/>
    </location>
</feature>
<feature type="compositionally biased region" description="Basic residues" evidence="3">
    <location>
        <begin position="328"/>
        <end position="346"/>
    </location>
</feature>
<feature type="compositionally biased region" description="Pro residues" evidence="3">
    <location>
        <begin position="347"/>
        <end position="401"/>
    </location>
</feature>
<feature type="compositionally biased region" description="Basic and acidic residues" evidence="3">
    <location>
        <begin position="408"/>
        <end position="429"/>
    </location>
</feature>
<feature type="compositionally biased region" description="Basic residues" evidence="3">
    <location>
        <begin position="438"/>
        <end position="449"/>
    </location>
</feature>
<feature type="site" description="Cleavage; by plasmin">
    <location>
        <begin position="303"/>
        <end position="304"/>
    </location>
</feature>
<feature type="site" description="Cleavage; by plasmin">
    <location>
        <begin position="421"/>
        <end position="422"/>
    </location>
</feature>
<feature type="glycosylation site" description="N-linked (GlcNAc...) asparagine" evidence="2">
    <location>
        <position position="115"/>
    </location>
</feature>
<feature type="glycosylation site" description="N-linked (GlcNAc...) asparagine" evidence="2">
    <location>
        <position position="192"/>
    </location>
</feature>
<feature type="glycosylation site" description="N-linked (GlcNAc...) asparagine" evidence="2">
    <location>
        <position position="240"/>
    </location>
</feature>
<feature type="glycosylation site" description="N-linked (GlcNAc...) asparagine" evidence="2">
    <location>
        <position position="310"/>
    </location>
</feature>
<feature type="glycosylation site" description="N-linked (GlcNAc...) asparagine" evidence="2">
    <location>
        <position position="485"/>
    </location>
</feature>
<feature type="disulfide bond" evidence="1">
    <location>
        <begin position="14"/>
        <end position="505"/>
    </location>
</feature>
<feature type="disulfide bond" evidence="1">
    <location>
        <begin position="68"/>
        <end position="79"/>
    </location>
</feature>
<feature type="disulfide bond" evidence="1">
    <location>
        <begin position="95"/>
        <end position="116"/>
    </location>
</feature>
<feature type="disulfide bond" evidence="1">
    <location>
        <begin position="193"/>
        <end position="415"/>
    </location>
</feature>
<feature type="disulfide bond" evidence="1">
    <location>
        <begin position="207"/>
        <end position="230"/>
    </location>
</feature>
<feature type="disulfide bond" evidence="2">
    <location>
        <begin position="272"/>
        <end position="302"/>
    </location>
</feature>
<feature type="non-terminal residue">
    <location>
        <position position="1"/>
    </location>
</feature>
<feature type="strand" evidence="7">
    <location>
        <begin position="134"/>
        <end position="137"/>
    </location>
</feature>
<feature type="helix" evidence="7">
    <location>
        <begin position="142"/>
        <end position="144"/>
    </location>
</feature>
<feature type="helix" evidence="7">
    <location>
        <begin position="145"/>
        <end position="157"/>
    </location>
</feature>
<feature type="helix" evidence="7">
    <location>
        <begin position="160"/>
        <end position="162"/>
    </location>
</feature>
<feature type="strand" evidence="7">
    <location>
        <begin position="165"/>
        <end position="177"/>
    </location>
</feature>
<feature type="strand" evidence="7">
    <location>
        <begin position="179"/>
        <end position="192"/>
    </location>
</feature>
<feature type="helix" evidence="7">
    <location>
        <begin position="193"/>
        <end position="196"/>
    </location>
</feature>
<feature type="strand" evidence="7">
    <location>
        <begin position="203"/>
        <end position="214"/>
    </location>
</feature>
<feature type="strand" evidence="7">
    <location>
        <begin position="219"/>
        <end position="221"/>
    </location>
</feature>
<feature type="strand" evidence="7">
    <location>
        <begin position="224"/>
        <end position="234"/>
    </location>
</feature>
<feature type="helix" evidence="7">
    <location>
        <begin position="235"/>
        <end position="237"/>
    </location>
</feature>
<feature type="turn" evidence="7">
    <location>
        <begin position="239"/>
        <end position="242"/>
    </location>
</feature>
<name>HRG_RABIT</name>
<dbReference type="EMBL" id="U32189">
    <property type="protein sequence ID" value="AAC48516.1"/>
    <property type="molecule type" value="mRNA"/>
</dbReference>
<dbReference type="PDB" id="4CCV">
    <property type="method" value="X-ray"/>
    <property type="resolution" value="1.93 A"/>
    <property type="chains" value="A=131-245"/>
</dbReference>
<dbReference type="PDBsum" id="4CCV"/>
<dbReference type="SMR" id="Q28640"/>
<dbReference type="FunCoup" id="Q28640">
    <property type="interactions" value="53"/>
</dbReference>
<dbReference type="STRING" id="9986.ENSOCUP00000025254"/>
<dbReference type="GlyCosmos" id="Q28640">
    <property type="glycosylation" value="5 sites, No reported glycans"/>
</dbReference>
<dbReference type="PaxDb" id="9986-ENSOCUP00000025254"/>
<dbReference type="eggNOG" id="ENOG502S50D">
    <property type="taxonomic scope" value="Eukaryota"/>
</dbReference>
<dbReference type="InParanoid" id="Q28640"/>
<dbReference type="EvolutionaryTrace" id="Q28640"/>
<dbReference type="Proteomes" id="UP000001811">
    <property type="component" value="Unplaced"/>
</dbReference>
<dbReference type="GO" id="GO:0072562">
    <property type="term" value="C:blood microparticle"/>
    <property type="evidence" value="ECO:0007669"/>
    <property type="project" value="TreeGrafter"/>
</dbReference>
<dbReference type="GO" id="GO:0004869">
    <property type="term" value="F:cysteine-type endopeptidase inhibitor activity"/>
    <property type="evidence" value="ECO:0007669"/>
    <property type="project" value="InterPro"/>
</dbReference>
<dbReference type="GO" id="GO:0020037">
    <property type="term" value="F:heme binding"/>
    <property type="evidence" value="ECO:0000250"/>
    <property type="project" value="UniProtKB"/>
</dbReference>
<dbReference type="GO" id="GO:0043395">
    <property type="term" value="F:heparan sulfate proteoglycan binding"/>
    <property type="evidence" value="ECO:0000250"/>
    <property type="project" value="UniProtKB"/>
</dbReference>
<dbReference type="GO" id="GO:0008201">
    <property type="term" value="F:heparin binding"/>
    <property type="evidence" value="ECO:0000250"/>
    <property type="project" value="UniProtKB"/>
</dbReference>
<dbReference type="GO" id="GO:0019865">
    <property type="term" value="F:immunoglobulin binding"/>
    <property type="evidence" value="ECO:0000250"/>
    <property type="project" value="UniProtKB"/>
</dbReference>
<dbReference type="GO" id="GO:0046872">
    <property type="term" value="F:metal ion binding"/>
    <property type="evidence" value="ECO:0000250"/>
    <property type="project" value="UniProtKB"/>
</dbReference>
<dbReference type="GO" id="GO:0004867">
    <property type="term" value="F:serine-type endopeptidase inhibitor activity"/>
    <property type="evidence" value="ECO:0007669"/>
    <property type="project" value="TreeGrafter"/>
</dbReference>
<dbReference type="GO" id="GO:0005102">
    <property type="term" value="F:signaling receptor binding"/>
    <property type="evidence" value="ECO:0000250"/>
    <property type="project" value="UniProtKB"/>
</dbReference>
<dbReference type="GO" id="GO:0008270">
    <property type="term" value="F:zinc ion binding"/>
    <property type="evidence" value="ECO:0000250"/>
    <property type="project" value="UniProtKB"/>
</dbReference>
<dbReference type="GO" id="GO:0050832">
    <property type="term" value="P:defense response to fungus"/>
    <property type="evidence" value="ECO:0000250"/>
    <property type="project" value="UniProtKB"/>
</dbReference>
<dbReference type="GO" id="GO:0042730">
    <property type="term" value="P:fibrinolysis"/>
    <property type="evidence" value="ECO:0007669"/>
    <property type="project" value="UniProtKB-KW"/>
</dbReference>
<dbReference type="GO" id="GO:0016525">
    <property type="term" value="P:negative regulation of angiogenesis"/>
    <property type="evidence" value="ECO:0000314"/>
    <property type="project" value="UniProtKB"/>
</dbReference>
<dbReference type="GO" id="GO:0043537">
    <property type="term" value="P:negative regulation of blood vessel endothelial cell migration"/>
    <property type="evidence" value="ECO:0000250"/>
    <property type="project" value="UniProtKB"/>
</dbReference>
<dbReference type="GO" id="GO:0007162">
    <property type="term" value="P:negative regulation of cell adhesion"/>
    <property type="evidence" value="ECO:0000250"/>
    <property type="project" value="UniProtKB"/>
</dbReference>
<dbReference type="GO" id="GO:0033629">
    <property type="term" value="P:negative regulation of cell adhesion mediated by integrin"/>
    <property type="evidence" value="ECO:0000250"/>
    <property type="project" value="UniProtKB"/>
</dbReference>
<dbReference type="GO" id="GO:0030308">
    <property type="term" value="P:negative regulation of cell growth"/>
    <property type="evidence" value="ECO:0000250"/>
    <property type="project" value="UniProtKB"/>
</dbReference>
<dbReference type="GO" id="GO:0008285">
    <property type="term" value="P:negative regulation of cell population proliferation"/>
    <property type="evidence" value="ECO:0000250"/>
    <property type="project" value="UniProtKB"/>
</dbReference>
<dbReference type="GO" id="GO:2001027">
    <property type="term" value="P:negative regulation of endothelial cell chemotaxis"/>
    <property type="evidence" value="ECO:0000250"/>
    <property type="project" value="UniProtKB"/>
</dbReference>
<dbReference type="GO" id="GO:0051918">
    <property type="term" value="P:negative regulation of fibrinolysis"/>
    <property type="evidence" value="ECO:0007669"/>
    <property type="project" value="TreeGrafter"/>
</dbReference>
<dbReference type="GO" id="GO:0010593">
    <property type="term" value="P:negative regulation of lamellipodium assembly"/>
    <property type="evidence" value="ECO:0000250"/>
    <property type="project" value="UniProtKB"/>
</dbReference>
<dbReference type="GO" id="GO:1900747">
    <property type="term" value="P:negative regulation of vascular endothelial growth factor signaling pathway"/>
    <property type="evidence" value="ECO:0000250"/>
    <property type="project" value="UniProtKB"/>
</dbReference>
<dbReference type="GO" id="GO:0030168">
    <property type="term" value="P:platelet activation"/>
    <property type="evidence" value="ECO:0000250"/>
    <property type="project" value="UniProtKB"/>
</dbReference>
<dbReference type="GO" id="GO:0043065">
    <property type="term" value="P:positive regulation of apoptotic process"/>
    <property type="evidence" value="ECO:0000250"/>
    <property type="project" value="UniProtKB"/>
</dbReference>
<dbReference type="GO" id="GO:2000504">
    <property type="term" value="P:positive regulation of blood vessel remodeling"/>
    <property type="evidence" value="ECO:0000250"/>
    <property type="project" value="UniProtKB"/>
</dbReference>
<dbReference type="GO" id="GO:0051894">
    <property type="term" value="P:positive regulation of focal adhesion assembly"/>
    <property type="evidence" value="ECO:0000250"/>
    <property type="project" value="UniProtKB"/>
</dbReference>
<dbReference type="GO" id="GO:0002839">
    <property type="term" value="P:positive regulation of immune response to tumor cell"/>
    <property type="evidence" value="ECO:0000250"/>
    <property type="project" value="UniProtKB"/>
</dbReference>
<dbReference type="GO" id="GO:0032956">
    <property type="term" value="P:regulation of actin cytoskeleton organization"/>
    <property type="evidence" value="ECO:0000250"/>
    <property type="project" value="UniProtKB"/>
</dbReference>
<dbReference type="GO" id="GO:0030193">
    <property type="term" value="P:regulation of blood coagulation"/>
    <property type="evidence" value="ECO:0000250"/>
    <property type="project" value="UniProtKB"/>
</dbReference>
<dbReference type="GO" id="GO:0010468">
    <property type="term" value="P:regulation of gene expression"/>
    <property type="evidence" value="ECO:0000250"/>
    <property type="project" value="UniProtKB"/>
</dbReference>
<dbReference type="GO" id="GO:0050730">
    <property type="term" value="P:regulation of peptidyl-tyrosine phosphorylation"/>
    <property type="evidence" value="ECO:0000250"/>
    <property type="project" value="UniProtKB"/>
</dbReference>
<dbReference type="GO" id="GO:0010755">
    <property type="term" value="P:regulation of plasminogen activation"/>
    <property type="evidence" value="ECO:0000314"/>
    <property type="project" value="UniProtKB"/>
</dbReference>
<dbReference type="GO" id="GO:0010543">
    <property type="term" value="P:regulation of platelet activation"/>
    <property type="evidence" value="ECO:0000250"/>
    <property type="project" value="UniProtKB"/>
</dbReference>
<dbReference type="GO" id="GO:0043254">
    <property type="term" value="P:regulation of protein-containing complex assembly"/>
    <property type="evidence" value="ECO:0000250"/>
    <property type="project" value="UniProtKB"/>
</dbReference>
<dbReference type="CDD" id="cd00042">
    <property type="entry name" value="CY"/>
    <property type="match status" value="1"/>
</dbReference>
<dbReference type="FunFam" id="3.10.450.10:FF:000005">
    <property type="entry name" value="Histidine-rich glycoprotein"/>
    <property type="match status" value="1"/>
</dbReference>
<dbReference type="FunFam" id="3.10.450.10:FF:000015">
    <property type="entry name" value="Histidine-rich glycoprotein"/>
    <property type="match status" value="1"/>
</dbReference>
<dbReference type="Gene3D" id="3.10.450.10">
    <property type="match status" value="2"/>
</dbReference>
<dbReference type="InterPro" id="IPR000010">
    <property type="entry name" value="Cystatin_dom"/>
</dbReference>
<dbReference type="InterPro" id="IPR046350">
    <property type="entry name" value="Cystatin_sf"/>
</dbReference>
<dbReference type="InterPro" id="IPR050735">
    <property type="entry name" value="Kininogen_Fetuin_HRG"/>
</dbReference>
<dbReference type="PANTHER" id="PTHR13814">
    <property type="entry name" value="FETUIN"/>
    <property type="match status" value="1"/>
</dbReference>
<dbReference type="PANTHER" id="PTHR13814:SF3">
    <property type="entry name" value="HISTIDINE-RICH GLYCOPROTEIN"/>
    <property type="match status" value="1"/>
</dbReference>
<dbReference type="Pfam" id="PF00031">
    <property type="entry name" value="Cystatin"/>
    <property type="match status" value="1"/>
</dbReference>
<dbReference type="SMART" id="SM00043">
    <property type="entry name" value="CY"/>
    <property type="match status" value="2"/>
</dbReference>
<dbReference type="SUPFAM" id="SSF54403">
    <property type="entry name" value="Cystatin/monellin"/>
    <property type="match status" value="1"/>
</dbReference>
<evidence type="ECO:0000250" key="1"/>
<evidence type="ECO:0000255" key="2"/>
<evidence type="ECO:0000256" key="3">
    <source>
        <dbReference type="SAM" id="MobiDB-lite"/>
    </source>
</evidence>
<evidence type="ECO:0000269" key="4">
    <source>
    </source>
</evidence>
<evidence type="ECO:0000269" key="5">
    <source>
    </source>
</evidence>
<evidence type="ECO:0000269" key="6">
    <source>
    </source>
</evidence>
<evidence type="ECO:0007829" key="7">
    <source>
        <dbReference type="PDB" id="4CCV"/>
    </source>
</evidence>
<sequence>ATLQCSWALTPTDCKTTKPLAEKALDLINKWRRDGYLFQLLRVADAHLDGAESATVYYLVLDVKETDCSVLSRKHWEDCDPDLTKRPSLDVIGQCKVIATRYSDEYQTLRLNDFNCTTSSVSSALANTKDSPVLFDFIEDTEPFRKSADKALEVYKSESEAYASFRVDRVERVTRVKGGERTNYYVDFSVRNCSRSHFHRHPAFGFCRADLSFDVEASNLENPEDVIISCEVFNFEEHGNISGFRPHLGKTPLGTDGSRDHHHPHKPHKFGCPPPQEGEDFSEGPPLQGGTPPLSPPFRPRCRHRPFGTNETHRFPHHRISVNIIHRPPPHGHHPHGPPPHGHHPHGPPPHGHPPHGPPPRHPPHGPPPHGHPPHGPPPHGHPPHGPPPHGHPPHGPPPHGHPPHGHGFHDHGPCDPPSHKEGPQDLHQHAMGPPPKHPGKRGPGKGHFPFHWRRIGSVYQLPPLQKGEVLPLPEANFPQLLLRNHTHPLKPEIQPFPQVASERCPEEFNGEFAQLSKFFPSTFPK</sequence>